<accession>Q5BJS2</accession>
<proteinExistence type="evidence at transcript level"/>
<sequence length="200" mass="21666">MASSLTCTGVIWALLSFLSAATSCVGFFMPYWLWGSQLGKPVSFGTFRRCSYPVHDESRQMMVMVEECGRYASFQGIPSTEWRICTIVTGLGCGLLLLVALTALMGCCVSELISRTVGRVAGGIQFLGGLLIGAGCALYPLGWDSEEVRQTCGYISDQFDLGKCEIGWAYYCTGAGAAAAMLLCTWLACFSGKKQKHYPY</sequence>
<feature type="signal peptide" evidence="3">
    <location>
        <begin position="1"/>
        <end position="23"/>
    </location>
</feature>
<feature type="chain" id="PRO_0000244758" description="LHFPL tetraspan subfamily member 6 protein">
    <location>
        <begin position="24"/>
        <end position="200"/>
    </location>
</feature>
<feature type="transmembrane region" description="Helical" evidence="3">
    <location>
        <begin position="84"/>
        <end position="104"/>
    </location>
</feature>
<feature type="transmembrane region" description="Helical" evidence="3">
    <location>
        <begin position="123"/>
        <end position="143"/>
    </location>
</feature>
<feature type="transmembrane region" description="Helical" evidence="3">
    <location>
        <begin position="166"/>
        <end position="186"/>
    </location>
</feature>
<keyword id="KW-0472">Membrane</keyword>
<keyword id="KW-1185">Reference proteome</keyword>
<keyword id="KW-0732">Signal</keyword>
<keyword id="KW-0812">Transmembrane</keyword>
<keyword id="KW-1133">Transmembrane helix</keyword>
<reference key="1">
    <citation type="journal article" date="2004" name="Genome Res.">
        <title>The status, quality, and expansion of the NIH full-length cDNA project: the Mammalian Gene Collection (MGC).</title>
        <authorList>
            <consortium name="The MGC Project Team"/>
        </authorList>
    </citation>
    <scope>NUCLEOTIDE SEQUENCE [LARGE SCALE MRNA]</scope>
    <source>
        <tissue>Brain</tissue>
    </source>
</reference>
<protein>
    <recommendedName>
        <fullName evidence="5">LHFPL tetraspan subfamily member 6 protein</fullName>
    </recommendedName>
    <alternativeName>
        <fullName evidence="2">Lipoma HMGIC fusion partner</fullName>
    </alternativeName>
</protein>
<organism>
    <name type="scientific">Rattus norvegicus</name>
    <name type="common">Rat</name>
    <dbReference type="NCBI Taxonomy" id="10116"/>
    <lineage>
        <taxon>Eukaryota</taxon>
        <taxon>Metazoa</taxon>
        <taxon>Chordata</taxon>
        <taxon>Craniata</taxon>
        <taxon>Vertebrata</taxon>
        <taxon>Euteleostomi</taxon>
        <taxon>Mammalia</taxon>
        <taxon>Eutheria</taxon>
        <taxon>Euarchontoglires</taxon>
        <taxon>Glires</taxon>
        <taxon>Rodentia</taxon>
        <taxon>Myomorpha</taxon>
        <taxon>Muroidea</taxon>
        <taxon>Muridae</taxon>
        <taxon>Murinae</taxon>
        <taxon>Rattus</taxon>
    </lineage>
</organism>
<gene>
    <name evidence="5" type="primary">Lhfpl6</name>
    <name evidence="1" type="synonym">Lhfp</name>
</gene>
<comment type="subcellular location">
    <subcellularLocation>
        <location evidence="4">Membrane</location>
        <topology evidence="4">Multi-pass membrane protein</topology>
    </subcellularLocation>
</comment>
<comment type="similarity">
    <text evidence="4">Belongs to the LHFP family.</text>
</comment>
<name>LHPL6_RAT</name>
<dbReference type="EMBL" id="BC091355">
    <property type="protein sequence ID" value="AAH91355.1"/>
    <property type="molecule type" value="mRNA"/>
</dbReference>
<dbReference type="RefSeq" id="NP_001102653.1">
    <property type="nucleotide sequence ID" value="NM_001109183.1"/>
</dbReference>
<dbReference type="SMR" id="Q5BJS2"/>
<dbReference type="FunCoup" id="Q5BJS2">
    <property type="interactions" value="807"/>
</dbReference>
<dbReference type="STRING" id="10116.ENSRNOP00000019057"/>
<dbReference type="PhosphoSitePlus" id="Q5BJS2"/>
<dbReference type="PaxDb" id="10116-ENSRNOP00000019057"/>
<dbReference type="Ensembl" id="ENSRNOT00000117418.1">
    <property type="protein sequence ID" value="ENSRNOP00000092096.1"/>
    <property type="gene ID" value="ENSRNOG00000014153.5"/>
</dbReference>
<dbReference type="GeneID" id="499615"/>
<dbReference type="KEGG" id="rno:499615"/>
<dbReference type="UCSC" id="RGD:1560177">
    <property type="organism name" value="rat"/>
</dbReference>
<dbReference type="AGR" id="RGD:1560177"/>
<dbReference type="CTD" id="10186"/>
<dbReference type="RGD" id="1560177">
    <property type="gene designation" value="Lhfpl6"/>
</dbReference>
<dbReference type="eggNOG" id="KOG4026">
    <property type="taxonomic scope" value="Eukaryota"/>
</dbReference>
<dbReference type="GeneTree" id="ENSGT00990000203589"/>
<dbReference type="HOGENOM" id="CLU_084868_2_0_1"/>
<dbReference type="InParanoid" id="Q5BJS2"/>
<dbReference type="OMA" id="QWRICTV"/>
<dbReference type="OrthoDB" id="9938692at2759"/>
<dbReference type="PhylomeDB" id="Q5BJS2"/>
<dbReference type="TreeFam" id="TF321143"/>
<dbReference type="PRO" id="PR:Q5BJS2"/>
<dbReference type="Proteomes" id="UP000002494">
    <property type="component" value="Chromosome 2"/>
</dbReference>
<dbReference type="Bgee" id="ENSRNOG00000014153">
    <property type="expression patterns" value="Expressed in lung and 19 other cell types or tissues"/>
</dbReference>
<dbReference type="GO" id="GO:0016020">
    <property type="term" value="C:membrane"/>
    <property type="evidence" value="ECO:0000318"/>
    <property type="project" value="GO_Central"/>
</dbReference>
<dbReference type="Gene3D" id="1.20.140.150">
    <property type="match status" value="1"/>
</dbReference>
<dbReference type="InterPro" id="IPR019372">
    <property type="entry name" value="LHFPL"/>
</dbReference>
<dbReference type="PANTHER" id="PTHR12489:SF12">
    <property type="entry name" value="LHFPL TETRASPAN SUBFAMILY MEMBER 6 PROTEIN"/>
    <property type="match status" value="1"/>
</dbReference>
<dbReference type="PANTHER" id="PTHR12489">
    <property type="entry name" value="LIPOMA HMGIC FUSION PARTNER-LIKE PROTEIN"/>
    <property type="match status" value="1"/>
</dbReference>
<dbReference type="Pfam" id="PF10242">
    <property type="entry name" value="L_HMGIC_fpl"/>
    <property type="match status" value="1"/>
</dbReference>
<evidence type="ECO:0000250" key="1">
    <source>
        <dbReference type="UniProtKB" id="Q8BM86"/>
    </source>
</evidence>
<evidence type="ECO:0000250" key="2">
    <source>
        <dbReference type="UniProtKB" id="Q9Y693"/>
    </source>
</evidence>
<evidence type="ECO:0000255" key="3"/>
<evidence type="ECO:0000305" key="4"/>
<evidence type="ECO:0000312" key="5">
    <source>
        <dbReference type="RGD" id="1560177"/>
    </source>
</evidence>